<name>SEY11_TRIV3</name>
<accession>A2EI35</accession>
<evidence type="ECO:0000255" key="1">
    <source>
        <dbReference type="HAMAP-Rule" id="MF_03109"/>
    </source>
</evidence>
<evidence type="ECO:0000255" key="2">
    <source>
        <dbReference type="PROSITE-ProRule" id="PRU01052"/>
    </source>
</evidence>
<evidence type="ECO:0000256" key="3">
    <source>
        <dbReference type="SAM" id="MobiDB-lite"/>
    </source>
</evidence>
<keyword id="KW-0256">Endoplasmic reticulum</keyword>
<keyword id="KW-0342">GTP-binding</keyword>
<keyword id="KW-0378">Hydrolase</keyword>
<keyword id="KW-0472">Membrane</keyword>
<keyword id="KW-0547">Nucleotide-binding</keyword>
<keyword id="KW-1185">Reference proteome</keyword>
<keyword id="KW-0812">Transmembrane</keyword>
<keyword id="KW-1133">Transmembrane helix</keyword>
<feature type="chain" id="PRO_0000384960" description="Protein SEY1 homolog 1">
    <location>
        <begin position="1"/>
        <end position="804"/>
    </location>
</feature>
<feature type="topological domain" description="Cytoplasmic" evidence="1">
    <location>
        <begin position="1"/>
        <end position="638"/>
    </location>
</feature>
<feature type="transmembrane region" description="Helical" evidence="1">
    <location>
        <begin position="639"/>
        <end position="659"/>
    </location>
</feature>
<feature type="topological domain" description="Lumenal" evidence="1">
    <location>
        <begin position="660"/>
        <end position="662"/>
    </location>
</feature>
<feature type="transmembrane region" description="Helical" evidence="1">
    <location>
        <begin position="663"/>
        <end position="683"/>
    </location>
</feature>
<feature type="topological domain" description="Cytoplasmic" evidence="1">
    <location>
        <begin position="684"/>
        <end position="804"/>
    </location>
</feature>
<feature type="domain" description="GB1/RHD3-type G" evidence="2">
    <location>
        <begin position="28"/>
        <end position="245"/>
    </location>
</feature>
<feature type="region of interest" description="Disordered" evidence="3">
    <location>
        <begin position="706"/>
        <end position="804"/>
    </location>
</feature>
<feature type="compositionally biased region" description="Polar residues" evidence="3">
    <location>
        <begin position="751"/>
        <end position="791"/>
    </location>
</feature>
<feature type="compositionally biased region" description="Basic residues" evidence="3">
    <location>
        <begin position="792"/>
        <end position="804"/>
    </location>
</feature>
<feature type="binding site" evidence="1">
    <location>
        <begin position="38"/>
        <end position="45"/>
    </location>
    <ligand>
        <name>GTP</name>
        <dbReference type="ChEBI" id="CHEBI:37565"/>
    </ligand>
</feature>
<dbReference type="EC" id="3.6.5.-" evidence="1"/>
<dbReference type="EMBL" id="DS113394">
    <property type="protein sequence ID" value="EAY07674.1"/>
    <property type="molecule type" value="Genomic_DNA"/>
</dbReference>
<dbReference type="RefSeq" id="XP_001319897.1">
    <property type="nucleotide sequence ID" value="XM_001319862.1"/>
</dbReference>
<dbReference type="SMR" id="A2EI35"/>
<dbReference type="FunCoup" id="A2EI35">
    <property type="interactions" value="174"/>
</dbReference>
<dbReference type="STRING" id="5722.A2EI35"/>
<dbReference type="KEGG" id="tva:TVAG_2v0521990"/>
<dbReference type="VEuPathDB" id="TrichDB:TVAG_273580"/>
<dbReference type="VEuPathDB" id="TrichDB:TVAGG3_0521990"/>
<dbReference type="eggNOG" id="KOG2203">
    <property type="taxonomic scope" value="Eukaryota"/>
</dbReference>
<dbReference type="InParanoid" id="A2EI35"/>
<dbReference type="OMA" id="ACAQSCI"/>
<dbReference type="OrthoDB" id="1597724at2759"/>
<dbReference type="Proteomes" id="UP000001542">
    <property type="component" value="Unassembled WGS sequence"/>
</dbReference>
<dbReference type="GO" id="GO:0005783">
    <property type="term" value="C:endoplasmic reticulum"/>
    <property type="evidence" value="ECO:0000318"/>
    <property type="project" value="GO_Central"/>
</dbReference>
<dbReference type="GO" id="GO:0005789">
    <property type="term" value="C:endoplasmic reticulum membrane"/>
    <property type="evidence" value="ECO:0007669"/>
    <property type="project" value="UniProtKB-SubCell"/>
</dbReference>
<dbReference type="GO" id="GO:0005525">
    <property type="term" value="F:GTP binding"/>
    <property type="evidence" value="ECO:0007669"/>
    <property type="project" value="UniProtKB-UniRule"/>
</dbReference>
<dbReference type="GO" id="GO:0003924">
    <property type="term" value="F:GTPase activity"/>
    <property type="evidence" value="ECO:0000318"/>
    <property type="project" value="GO_Central"/>
</dbReference>
<dbReference type="GO" id="GO:0016320">
    <property type="term" value="P:endoplasmic reticulum membrane fusion"/>
    <property type="evidence" value="ECO:0000318"/>
    <property type="project" value="GO_Central"/>
</dbReference>
<dbReference type="CDD" id="cd01851">
    <property type="entry name" value="GBP"/>
    <property type="match status" value="1"/>
</dbReference>
<dbReference type="FunFam" id="3.40.50.300:FF:000727">
    <property type="entry name" value="Protein SEY1 homolog"/>
    <property type="match status" value="1"/>
</dbReference>
<dbReference type="Gene3D" id="3.40.50.300">
    <property type="entry name" value="P-loop containing nucleotide triphosphate hydrolases"/>
    <property type="match status" value="1"/>
</dbReference>
<dbReference type="HAMAP" id="MF_03109">
    <property type="entry name" value="Sey1"/>
    <property type="match status" value="1"/>
</dbReference>
<dbReference type="InterPro" id="IPR030386">
    <property type="entry name" value="G_GB1_RHD3_dom"/>
</dbReference>
<dbReference type="InterPro" id="IPR027417">
    <property type="entry name" value="P-loop_NTPase"/>
</dbReference>
<dbReference type="InterPro" id="IPR008803">
    <property type="entry name" value="RHD3/Sey1"/>
</dbReference>
<dbReference type="InterPro" id="IPR046758">
    <property type="entry name" value="Sey1/RHD3-like_3HB"/>
</dbReference>
<dbReference type="PANTHER" id="PTHR45923">
    <property type="entry name" value="PROTEIN SEY1"/>
    <property type="match status" value="1"/>
</dbReference>
<dbReference type="PANTHER" id="PTHR45923:SF2">
    <property type="entry name" value="PROTEIN SEY1"/>
    <property type="match status" value="1"/>
</dbReference>
<dbReference type="Pfam" id="PF05879">
    <property type="entry name" value="RHD3_GTPase"/>
    <property type="match status" value="1"/>
</dbReference>
<dbReference type="Pfam" id="PF20428">
    <property type="entry name" value="Sey1_3HB"/>
    <property type="match status" value="2"/>
</dbReference>
<dbReference type="SUPFAM" id="SSF52540">
    <property type="entry name" value="P-loop containing nucleoside triphosphate hydrolases"/>
    <property type="match status" value="1"/>
</dbReference>
<dbReference type="PROSITE" id="PS51715">
    <property type="entry name" value="G_GB1_RHD3"/>
    <property type="match status" value="1"/>
</dbReference>
<protein>
    <recommendedName>
        <fullName evidence="1">Protein SEY1 homolog 1</fullName>
        <ecNumber evidence="1">3.6.5.-</ecNumber>
    </recommendedName>
</protein>
<organism>
    <name type="scientific">Trichomonas vaginalis (strain ATCC PRA-98 / G3)</name>
    <dbReference type="NCBI Taxonomy" id="412133"/>
    <lineage>
        <taxon>Eukaryota</taxon>
        <taxon>Metamonada</taxon>
        <taxon>Parabasalia</taxon>
        <taxon>Trichomonadida</taxon>
        <taxon>Trichomonadidae</taxon>
        <taxon>Trichomonas</taxon>
    </lineage>
</organism>
<gene>
    <name type="ORF">TVAG_273580</name>
</gene>
<proteinExistence type="inferred from homology"/>
<reference key="1">
    <citation type="journal article" date="2007" name="Science">
        <title>Draft genome sequence of the sexually transmitted pathogen Trichomonas vaginalis.</title>
        <authorList>
            <person name="Carlton J.M."/>
            <person name="Hirt R.P."/>
            <person name="Silva J.C."/>
            <person name="Delcher A.L."/>
            <person name="Schatz M."/>
            <person name="Zhao Q."/>
            <person name="Wortman J.R."/>
            <person name="Bidwell S.L."/>
            <person name="Alsmark U.C.M."/>
            <person name="Besteiro S."/>
            <person name="Sicheritz-Ponten T."/>
            <person name="Noel C.J."/>
            <person name="Dacks J.B."/>
            <person name="Foster P.G."/>
            <person name="Simillion C."/>
            <person name="Van de Peer Y."/>
            <person name="Miranda-Saavedra D."/>
            <person name="Barton G.J."/>
            <person name="Westrop G.D."/>
            <person name="Mueller S."/>
            <person name="Dessi D."/>
            <person name="Fiori P.L."/>
            <person name="Ren Q."/>
            <person name="Paulsen I."/>
            <person name="Zhang H."/>
            <person name="Bastida-Corcuera F.D."/>
            <person name="Simoes-Barbosa A."/>
            <person name="Brown M.T."/>
            <person name="Hayes R.D."/>
            <person name="Mukherjee M."/>
            <person name="Okumura C.Y."/>
            <person name="Schneider R."/>
            <person name="Smith A.J."/>
            <person name="Vanacova S."/>
            <person name="Villalvazo M."/>
            <person name="Haas B.J."/>
            <person name="Pertea M."/>
            <person name="Feldblyum T.V."/>
            <person name="Utterback T.R."/>
            <person name="Shu C.L."/>
            <person name="Osoegawa K."/>
            <person name="de Jong P.J."/>
            <person name="Hrdy I."/>
            <person name="Horvathova L."/>
            <person name="Zubacova Z."/>
            <person name="Dolezal P."/>
            <person name="Malik S.B."/>
            <person name="Logsdon J.M. Jr."/>
            <person name="Henze K."/>
            <person name="Gupta A."/>
            <person name="Wang C.C."/>
            <person name="Dunne R.L."/>
            <person name="Upcroft J.A."/>
            <person name="Upcroft P."/>
            <person name="White O."/>
            <person name="Salzberg S.L."/>
            <person name="Tang P."/>
            <person name="Chiu C.-H."/>
            <person name="Lee Y.-S."/>
            <person name="Embley T.M."/>
            <person name="Coombs G.H."/>
            <person name="Mottram J.C."/>
            <person name="Tachezy J."/>
            <person name="Fraser-Liggett C.M."/>
            <person name="Johnson P.J."/>
        </authorList>
    </citation>
    <scope>NUCLEOTIDE SEQUENCE [LARGE SCALE GENOMIC DNA]</scope>
    <source>
        <strain>ATCC PRA-98 / G3</strain>
    </source>
</reference>
<comment type="function">
    <text evidence="1">Probable GTP-binding protein that may be involved in cell development.</text>
</comment>
<comment type="subcellular location">
    <subcellularLocation>
        <location evidence="1">Endoplasmic reticulum membrane</location>
        <topology evidence="1">Multi-pass membrane protein</topology>
    </subcellularLocation>
</comment>
<comment type="similarity">
    <text evidence="2">Belongs to the TRAFAC class dynamin-like GTPase superfamily. GB1/RHD3 GTPase family. RHD3 subfamily.</text>
</comment>
<sequence length="804" mass="92417">MEQIITGEGQIVPDLDEHITRSGIDQAGTDYHMVSIIGCQSSGKSTLLNLLFGTKFETMNEQKGRQQTTKGIHAARAVNGPILLFDVEGSDSRERGDSDALFERKSSLFALALSELLVINMWESDIGRYNAANIPMLKTVMEVNVQLFLAQSTSKSKILFVIRDSTIPNFDVIKFQINRDMENIWAEITLPDSLKDKTIHDFFDFDFYAIHHMVIQRDIFDKDISALRQRFIDEKEENYLFKEKSTKVVPGGGLSTYIRNLWEVINENKELNIPSQKLMLSRFKCEENAKAAYDQFKEKVTKTILEPMADESVNLGDKFKSNAEEAIKAANKFYHDNSWRYQQAAVEEFQQKLSTDIGDLLISYYIKHCNYYARQVMQEFTKFISGLPDSFEKGGKWAIEVQAKIDELSLRLDSTCRDSLIEGYKWQFPSFKTIKAMDDARKSYEEIMTKKLYKNIFAEEKIAFDDKASELLMIADQNMWENLRKLIEASAKVTDDRFMEIIKTNVLNPKPQEGTLKRFQRHALNIVKESANYIMMKMKTAFDRSFRYEKNGRPRVWTRRHNLNQIYEESRASGRKVLILFTYCRLASPDDQTPNNPLNQVLIPVEKSQEIEEKFEKLIIHAYEEARASVLASQNNEHIPPWAWFLFLFSCSDYILWWLSNPLLFSLTVLFGGTYLVLNQLGLWDTAVQKLLDIIKKKIVELGATPDENNETETNQTIPVEESQITPPPPTETTTDDGPVMKRRVHRSKAQGLTKTESNVTFANVSNANDEQSLTKNNTEDSLNTGSSSSGQRHRKRVRVGTLV</sequence>